<dbReference type="EC" id="2.3.2.27" evidence="3"/>
<dbReference type="EMBL" id="BC133334">
    <property type="protein sequence ID" value="AAI33335.1"/>
    <property type="molecule type" value="mRNA"/>
</dbReference>
<dbReference type="RefSeq" id="NP_001075056.1">
    <property type="nucleotide sequence ID" value="NM_001081587.1"/>
</dbReference>
<dbReference type="RefSeq" id="XP_010806508.1">
    <property type="nucleotide sequence ID" value="XM_010808206.2"/>
</dbReference>
<dbReference type="RefSeq" id="XP_010806510.1">
    <property type="nucleotide sequence ID" value="XM_010808208.2"/>
</dbReference>
<dbReference type="RefSeq" id="XP_024851443.1">
    <property type="nucleotide sequence ID" value="XM_024995675.2"/>
</dbReference>
<dbReference type="RefSeq" id="XP_059745037.1">
    <property type="nucleotide sequence ID" value="XM_059889054.1"/>
</dbReference>
<dbReference type="SMR" id="A2VDP1"/>
<dbReference type="FunCoup" id="A2VDP1">
    <property type="interactions" value="4284"/>
</dbReference>
<dbReference type="STRING" id="9913.ENSBTAP00000012521"/>
<dbReference type="PaxDb" id="9913-ENSBTAP00000012521"/>
<dbReference type="Ensembl" id="ENSBTAT00000012521.6">
    <property type="protein sequence ID" value="ENSBTAP00000012521.5"/>
    <property type="gene ID" value="ENSBTAG00000009516.7"/>
</dbReference>
<dbReference type="GeneID" id="513326"/>
<dbReference type="KEGG" id="bta:513326"/>
<dbReference type="CTD" id="56254"/>
<dbReference type="VEuPathDB" id="HostDB:ENSBTAG00000009516"/>
<dbReference type="VGNC" id="VGNC:34047">
    <property type="gene designation" value="RNF20"/>
</dbReference>
<dbReference type="eggNOG" id="KOG0978">
    <property type="taxonomic scope" value="Eukaryota"/>
</dbReference>
<dbReference type="GeneTree" id="ENSGT00390000002866"/>
<dbReference type="HOGENOM" id="CLU_002640_0_0_1"/>
<dbReference type="InParanoid" id="A2VDP1"/>
<dbReference type="OMA" id="YSNIDTR"/>
<dbReference type="OrthoDB" id="10266039at2759"/>
<dbReference type="TreeFam" id="TF323183"/>
<dbReference type="Reactome" id="R-BTA-8866654">
    <property type="pathway name" value="E3 ubiquitin ligases ubiquitinate target proteins"/>
</dbReference>
<dbReference type="Reactome" id="R-BTA-9013422">
    <property type="pathway name" value="RHOBTB1 GTPase cycle"/>
</dbReference>
<dbReference type="UniPathway" id="UPA00143"/>
<dbReference type="Proteomes" id="UP000009136">
    <property type="component" value="Chromosome 8"/>
</dbReference>
<dbReference type="Bgee" id="ENSBTAG00000009516">
    <property type="expression patterns" value="Expressed in thymus and 104 other cell types or tissues"/>
</dbReference>
<dbReference type="GO" id="GO:0033503">
    <property type="term" value="C:HULC complex"/>
    <property type="evidence" value="ECO:0000250"/>
    <property type="project" value="UniProtKB"/>
</dbReference>
<dbReference type="GO" id="GO:0005730">
    <property type="term" value="C:nucleolus"/>
    <property type="evidence" value="ECO:0000250"/>
    <property type="project" value="UniProtKB"/>
</dbReference>
<dbReference type="GO" id="GO:0005634">
    <property type="term" value="C:nucleus"/>
    <property type="evidence" value="ECO:0000318"/>
    <property type="project" value="GO_Central"/>
</dbReference>
<dbReference type="GO" id="GO:0000151">
    <property type="term" value="C:ubiquitin ligase complex"/>
    <property type="evidence" value="ECO:0000250"/>
    <property type="project" value="UniProtKB"/>
</dbReference>
<dbReference type="GO" id="GO:0042393">
    <property type="term" value="F:histone binding"/>
    <property type="evidence" value="ECO:0000250"/>
    <property type="project" value="UniProtKB"/>
</dbReference>
<dbReference type="GO" id="GO:0002039">
    <property type="term" value="F:p53 binding"/>
    <property type="evidence" value="ECO:0000250"/>
    <property type="project" value="UniProtKB"/>
</dbReference>
<dbReference type="GO" id="GO:0003713">
    <property type="term" value="F:transcription coactivator activity"/>
    <property type="evidence" value="ECO:0000250"/>
    <property type="project" value="UniProtKB"/>
</dbReference>
<dbReference type="GO" id="GO:0061630">
    <property type="term" value="F:ubiquitin protein ligase activity"/>
    <property type="evidence" value="ECO:0000318"/>
    <property type="project" value="GO_Central"/>
</dbReference>
<dbReference type="GO" id="GO:0031625">
    <property type="term" value="F:ubiquitin protein ligase binding"/>
    <property type="evidence" value="ECO:0000250"/>
    <property type="project" value="UniProtKB"/>
</dbReference>
<dbReference type="GO" id="GO:0008270">
    <property type="term" value="F:zinc ion binding"/>
    <property type="evidence" value="ECO:0007669"/>
    <property type="project" value="UniProtKB-KW"/>
</dbReference>
<dbReference type="GO" id="GO:0006325">
    <property type="term" value="P:chromatin organization"/>
    <property type="evidence" value="ECO:0007669"/>
    <property type="project" value="UniProtKB-KW"/>
</dbReference>
<dbReference type="GO" id="GO:0030336">
    <property type="term" value="P:negative regulation of cell migration"/>
    <property type="evidence" value="ECO:0000250"/>
    <property type="project" value="UniProtKB"/>
</dbReference>
<dbReference type="GO" id="GO:0045893">
    <property type="term" value="P:positive regulation of DNA-templated transcription"/>
    <property type="evidence" value="ECO:0000250"/>
    <property type="project" value="UniProtKB"/>
</dbReference>
<dbReference type="GO" id="GO:0045944">
    <property type="term" value="P:positive regulation of transcription by RNA polymerase II"/>
    <property type="evidence" value="ECO:0000250"/>
    <property type="project" value="UniProtKB"/>
</dbReference>
<dbReference type="GO" id="GO:0000209">
    <property type="term" value="P:protein polyubiquitination"/>
    <property type="evidence" value="ECO:0000250"/>
    <property type="project" value="UniProtKB"/>
</dbReference>
<dbReference type="GO" id="GO:0006355">
    <property type="term" value="P:regulation of DNA-templated transcription"/>
    <property type="evidence" value="ECO:0000250"/>
    <property type="project" value="UniProtKB"/>
</dbReference>
<dbReference type="GO" id="GO:0006511">
    <property type="term" value="P:ubiquitin-dependent protein catabolic process"/>
    <property type="evidence" value="ECO:0000250"/>
    <property type="project" value="UniProtKB"/>
</dbReference>
<dbReference type="CDD" id="cd16814">
    <property type="entry name" value="RING-HC_RNF20"/>
    <property type="match status" value="1"/>
</dbReference>
<dbReference type="FunFam" id="1.20.1170.10:FF:000003">
    <property type="entry name" value="E3 ubiquitin protein ligase"/>
    <property type="match status" value="1"/>
</dbReference>
<dbReference type="FunFam" id="3.30.40.10:FF:000040">
    <property type="entry name" value="E3 ubiquitin protein ligase"/>
    <property type="match status" value="1"/>
</dbReference>
<dbReference type="Gene3D" id="1.20.1170.10">
    <property type="match status" value="1"/>
</dbReference>
<dbReference type="Gene3D" id="3.30.40.10">
    <property type="entry name" value="Zinc/RING finger domain, C3HC4 (zinc finger)"/>
    <property type="match status" value="1"/>
</dbReference>
<dbReference type="InterPro" id="IPR013956">
    <property type="entry name" value="E3_ubiquit_lig_Bre1"/>
</dbReference>
<dbReference type="InterPro" id="IPR018957">
    <property type="entry name" value="Znf_C3HC4_RING-type"/>
</dbReference>
<dbReference type="InterPro" id="IPR001841">
    <property type="entry name" value="Znf_RING"/>
</dbReference>
<dbReference type="InterPro" id="IPR013083">
    <property type="entry name" value="Znf_RING/FYVE/PHD"/>
</dbReference>
<dbReference type="InterPro" id="IPR017907">
    <property type="entry name" value="Znf_RING_CS"/>
</dbReference>
<dbReference type="PANTHER" id="PTHR23163:SF2">
    <property type="entry name" value="E3 UBIQUITIN-PROTEIN LIGASE BRE1A"/>
    <property type="match status" value="1"/>
</dbReference>
<dbReference type="PANTHER" id="PTHR23163">
    <property type="entry name" value="RING FINGER PROTEIN-RELATED"/>
    <property type="match status" value="1"/>
</dbReference>
<dbReference type="Pfam" id="PF00097">
    <property type="entry name" value="zf-C3HC4"/>
    <property type="match status" value="1"/>
</dbReference>
<dbReference type="SMART" id="SM00184">
    <property type="entry name" value="RING"/>
    <property type="match status" value="1"/>
</dbReference>
<dbReference type="SUPFAM" id="SSF57850">
    <property type="entry name" value="RING/U-box"/>
    <property type="match status" value="1"/>
</dbReference>
<dbReference type="PROSITE" id="PS00518">
    <property type="entry name" value="ZF_RING_1"/>
    <property type="match status" value="1"/>
</dbReference>
<dbReference type="PROSITE" id="PS50089">
    <property type="entry name" value="ZF_RING_2"/>
    <property type="match status" value="1"/>
</dbReference>
<reference key="1">
    <citation type="submission" date="2007-02" db="EMBL/GenBank/DDBJ databases">
        <authorList>
            <consortium name="NIH - Mammalian Gene Collection (MGC) project"/>
        </authorList>
    </citation>
    <scope>NUCLEOTIDE SEQUENCE [LARGE SCALE MRNA]</scope>
    <source>
        <strain>Hereford</strain>
        <tissue>Basal ganglia</tissue>
    </source>
</reference>
<gene>
    <name type="primary">RNF20</name>
    <name type="synonym">BRE1A</name>
</gene>
<accession>A2VDP1</accession>
<feature type="chain" id="PRO_0000327716" description="E3 ubiquitin-protein ligase BRE1A">
    <location>
        <begin position="1"/>
        <end position="975"/>
    </location>
</feature>
<feature type="zinc finger region" description="RING-type" evidence="5">
    <location>
        <begin position="922"/>
        <end position="961"/>
    </location>
</feature>
<feature type="region of interest" description="Disordered" evidence="6">
    <location>
        <begin position="1"/>
        <end position="37"/>
    </location>
</feature>
<feature type="region of interest" description="Disordered" evidence="6">
    <location>
        <begin position="125"/>
        <end position="155"/>
    </location>
</feature>
<feature type="region of interest" description="Disordered" evidence="6">
    <location>
        <begin position="507"/>
        <end position="622"/>
    </location>
</feature>
<feature type="coiled-coil region" evidence="4">
    <location>
        <begin position="43"/>
        <end position="90"/>
    </location>
</feature>
<feature type="coiled-coil region" evidence="4">
    <location>
        <begin position="168"/>
        <end position="375"/>
    </location>
</feature>
<feature type="coiled-coil region" evidence="4">
    <location>
        <begin position="429"/>
        <end position="898"/>
    </location>
</feature>
<feature type="compositionally biased region" description="Basic and acidic residues" evidence="6">
    <location>
        <begin position="139"/>
        <end position="151"/>
    </location>
</feature>
<feature type="compositionally biased region" description="Basic and acidic residues" evidence="6">
    <location>
        <begin position="527"/>
        <end position="540"/>
    </location>
</feature>
<feature type="compositionally biased region" description="Polar residues" evidence="6">
    <location>
        <begin position="543"/>
        <end position="552"/>
    </location>
</feature>
<feature type="compositionally biased region" description="Basic and acidic residues" evidence="6">
    <location>
        <begin position="558"/>
        <end position="622"/>
    </location>
</feature>
<feature type="modified residue" description="N6-acetyllysine" evidence="1">
    <location>
        <position position="21"/>
    </location>
</feature>
<feature type="modified residue" description="Phosphoserine" evidence="3">
    <location>
        <position position="41"/>
    </location>
</feature>
<feature type="modified residue" description="Phosphoserine" evidence="3">
    <location>
        <position position="136"/>
    </location>
</feature>
<feature type="modified residue" description="Phosphoserine" evidence="3">
    <location>
        <position position="138"/>
    </location>
</feature>
<feature type="modified residue" description="N6-acetyllysine" evidence="3">
    <location>
        <position position="348"/>
    </location>
</feature>
<feature type="modified residue" description="N6-acetyllysine" evidence="1">
    <location>
        <position position="510"/>
    </location>
</feature>
<feature type="modified residue" description="Phosphoserine" evidence="3">
    <location>
        <position position="522"/>
    </location>
</feature>
<feature type="modified residue" description="Phosphoserine" evidence="1">
    <location>
        <position position="562"/>
    </location>
</feature>
<proteinExistence type="evidence at transcript level"/>
<protein>
    <recommendedName>
        <fullName>E3 ubiquitin-protein ligase BRE1A</fullName>
        <shortName>BRE1-A</shortName>
        <ecNumber evidence="3">2.3.2.27</ecNumber>
    </recommendedName>
    <alternativeName>
        <fullName>RING finger protein 20</fullName>
    </alternativeName>
    <alternativeName>
        <fullName evidence="7">RING-type E3 ubiquitin transferase BRE1A</fullName>
    </alternativeName>
</protein>
<name>BRE1A_BOVIN</name>
<keyword id="KW-0007">Acetylation</keyword>
<keyword id="KW-0156">Chromatin regulator</keyword>
<keyword id="KW-0175">Coiled coil</keyword>
<keyword id="KW-0479">Metal-binding</keyword>
<keyword id="KW-0539">Nucleus</keyword>
<keyword id="KW-0597">Phosphoprotein</keyword>
<keyword id="KW-1185">Reference proteome</keyword>
<keyword id="KW-0808">Transferase</keyword>
<keyword id="KW-0833">Ubl conjugation pathway</keyword>
<keyword id="KW-0862">Zinc</keyword>
<keyword id="KW-0863">Zinc-finger</keyword>
<comment type="function">
    <text evidence="3">Component of the RNF20/40 E3 ubiquitin-protein ligase complex that mediates monoubiquitination of 'Lys-120' of histone H2B (H2BK120ub1). H2BK120ub1 gives a specific tag for epigenetic transcriptional activation and is also prerequisite for histone H3 'Lys-4' and 'Lys-79' methylation (H3K4me and H3K79me, respectively). It thereby plays a central role in histone code and gene regulation. The RNF20/40 complex forms a H2B ubiquitin ligase complex in cooperation with the E2 enzyme UBE2A or UBE2B; reports about the cooperation with UBE2E1/UBCH are contradictory. Required for transcriptional activation of Hox genes. Recruited to the MDM2 promoter, probably by being recruited by p53/TP53, and thereby acts as a transcriptional coactivator. Mediates the polyubiquitination of PA2G4 leading to its proteasome-mediated degradation.</text>
</comment>
<comment type="catalytic activity">
    <reaction evidence="3">
        <text>S-ubiquitinyl-[E2 ubiquitin-conjugating enzyme]-L-cysteine + [acceptor protein]-L-lysine = [E2 ubiquitin-conjugating enzyme]-L-cysteine + N(6)-ubiquitinyl-[acceptor protein]-L-lysine.</text>
        <dbReference type="EC" id="2.3.2.27"/>
    </reaction>
</comment>
<comment type="pathway">
    <text>Protein modification; protein ubiquitination.</text>
</comment>
<comment type="subunit">
    <text evidence="2 3">Component of the RNF20/40 complex (also known as BRE1 complex) probably composed of 2 copies of RNF20/BRE1A and 2 copies of RNF40/BRE1B. Interacts with UBE2E1/UBCH6. Interacts with p53/TP53 and WAC. Interacts with PAF1; the interaction mediates the association of the PAF1 and RNF20/40 complexes which is a prerequsite for recruitment of UBE2A/B. Interacts with PA2G4. Interacts with FBXL19.</text>
</comment>
<comment type="subcellular location">
    <subcellularLocation>
        <location evidence="3">Nucleus</location>
    </subcellularLocation>
</comment>
<comment type="similarity">
    <text evidence="7">Belongs to the BRE1 family.</text>
</comment>
<evidence type="ECO:0000250" key="1">
    <source>
        <dbReference type="UniProtKB" id="Q3U319"/>
    </source>
</evidence>
<evidence type="ECO:0000250" key="2">
    <source>
        <dbReference type="UniProtKB" id="Q5DTM8"/>
    </source>
</evidence>
<evidence type="ECO:0000250" key="3">
    <source>
        <dbReference type="UniProtKB" id="Q5VTR2"/>
    </source>
</evidence>
<evidence type="ECO:0000255" key="4"/>
<evidence type="ECO:0000255" key="5">
    <source>
        <dbReference type="PROSITE-ProRule" id="PRU00175"/>
    </source>
</evidence>
<evidence type="ECO:0000256" key="6">
    <source>
        <dbReference type="SAM" id="MobiDB-lite"/>
    </source>
</evidence>
<evidence type="ECO:0000305" key="7"/>
<sequence length="975" mass="113658">MSGIGSKRAAGEPGTSVPPEKKTAVEDSGTTVETIKLGGVSSTEELDIRTLQTKNRKLAEMLDQRQAIEDELREHIEKLERRQATDDASLLIVNRYWSQFDENIRIILKRYDLEQGLGDLLTERKALVVPEPEPDSDSNQERKDDRERGEGQEPAFSFLATLASSSSEEMESQLQERVESSRRAVSQIVTVYDKLQEKVELLSRKLNSGDSLMVEEAVQELNSFLAQENTRLQELTDLLQEKHCTMSQEFSKLQSKVETAESRVSVLESMIDDLQWDIDKIRKREQRLNRHLAEVLERVNSKGYKVYGAGSSLYGGTITINARKFEEMNAELEENKELAQNRHCELEKLRQDFEEVTSQNEKLKVELRSAVEEVVKETPEYRCMQSQFSVLYNESLQLKAHLDEARTLLHGTRGTHQRQVELIERDEVSLHKKLRTEVIQLEDTLAQVRKEYEMLRIEFEQTLAANEQAGPINREMRHLISSLQNHNHQLKGEVLRYKRKLREAQSDLNKTRLRSGSALLQSQSSTEDPKDEPAELKQDSEDLATQSAASKASQEEVNEIKSKRDEEERERERREKEREREREREKEKEREREKQKLKESEKERESAKDKEKGKHDDGRKKEAEIIKQLKIELKKAQESQKEMKLLLDMYRSAPKEQRDKVQLMAAEKKSKAELEDLRQRLKDLEDKEKKENKKMADEDALRKIRAVEEQIEYLQKKLAMAKQEEEALLSEMDVTGQAFEDMQEQNIRLMQQLREKDDANFKLMSERIKSNQIHKLLKEEKEELADQVLTLKTQVDAQLQVVRKLEEKEHLLQSNIGTGEKELGLRTQALEMNKRKAMEAAQLADDLKAQLEMAQKKLHDFQDEIVENSVTKEKDMFNFKRAQEDISRLRRKLETTKKPDNVPKCDEILMEEIKDYKARLTCPCCNMRKKDAVLTKCFHVFCFECVKTRYDTRQRKCPKCNAAFGANDFHRIYIG</sequence>
<organism>
    <name type="scientific">Bos taurus</name>
    <name type="common">Bovine</name>
    <dbReference type="NCBI Taxonomy" id="9913"/>
    <lineage>
        <taxon>Eukaryota</taxon>
        <taxon>Metazoa</taxon>
        <taxon>Chordata</taxon>
        <taxon>Craniata</taxon>
        <taxon>Vertebrata</taxon>
        <taxon>Euteleostomi</taxon>
        <taxon>Mammalia</taxon>
        <taxon>Eutheria</taxon>
        <taxon>Laurasiatheria</taxon>
        <taxon>Artiodactyla</taxon>
        <taxon>Ruminantia</taxon>
        <taxon>Pecora</taxon>
        <taxon>Bovidae</taxon>
        <taxon>Bovinae</taxon>
        <taxon>Bos</taxon>
    </lineage>
</organism>